<organism>
    <name type="scientific">Arabidopsis thaliana</name>
    <name type="common">Mouse-ear cress</name>
    <dbReference type="NCBI Taxonomy" id="3702"/>
    <lineage>
        <taxon>Eukaryota</taxon>
        <taxon>Viridiplantae</taxon>
        <taxon>Streptophyta</taxon>
        <taxon>Embryophyta</taxon>
        <taxon>Tracheophyta</taxon>
        <taxon>Spermatophyta</taxon>
        <taxon>Magnoliopsida</taxon>
        <taxon>eudicotyledons</taxon>
        <taxon>Gunneridae</taxon>
        <taxon>Pentapetalae</taxon>
        <taxon>rosids</taxon>
        <taxon>malvids</taxon>
        <taxon>Brassicales</taxon>
        <taxon>Brassicaceae</taxon>
        <taxon>Camelineae</taxon>
        <taxon>Arabidopsis</taxon>
    </lineage>
</organism>
<proteinExistence type="evidence at protein level"/>
<reference key="1">
    <citation type="submission" date="2003-06" db="EMBL/GenBank/DDBJ databases">
        <title>A stress inducible dual-specific phosphatase that plays a role in ABA and sugar signaling.</title>
        <authorList>
            <person name="Gupta R."/>
            <person name="Sokolov L.N."/>
            <person name="Luan S."/>
        </authorList>
    </citation>
    <scope>NUCLEOTIDE SEQUENCE [MRNA]</scope>
    <source>
        <strain>cv. Columbia</strain>
    </source>
</reference>
<reference key="2">
    <citation type="journal article" date="1999" name="Nature">
        <title>Sequence and analysis of chromosome 2 of the plant Arabidopsis thaliana.</title>
        <authorList>
            <person name="Lin X."/>
            <person name="Kaul S."/>
            <person name="Rounsley S.D."/>
            <person name="Shea T.P."/>
            <person name="Benito M.-I."/>
            <person name="Town C.D."/>
            <person name="Fujii C.Y."/>
            <person name="Mason T.M."/>
            <person name="Bowman C.L."/>
            <person name="Barnstead M.E."/>
            <person name="Feldblyum T.V."/>
            <person name="Buell C.R."/>
            <person name="Ketchum K.A."/>
            <person name="Lee J.J."/>
            <person name="Ronning C.M."/>
            <person name="Koo H.L."/>
            <person name="Moffat K.S."/>
            <person name="Cronin L.A."/>
            <person name="Shen M."/>
            <person name="Pai G."/>
            <person name="Van Aken S."/>
            <person name="Umayam L."/>
            <person name="Tallon L.J."/>
            <person name="Gill J.E."/>
            <person name="Adams M.D."/>
            <person name="Carrera A.J."/>
            <person name="Creasy T.H."/>
            <person name="Goodman H.M."/>
            <person name="Somerville C.R."/>
            <person name="Copenhaver G.P."/>
            <person name="Preuss D."/>
            <person name="Nierman W.C."/>
            <person name="White O."/>
            <person name="Eisen J.A."/>
            <person name="Salzberg S.L."/>
            <person name="Fraser C.M."/>
            <person name="Venter J.C."/>
        </authorList>
    </citation>
    <scope>NUCLEOTIDE SEQUENCE [LARGE SCALE GENOMIC DNA]</scope>
    <source>
        <strain>cv. Columbia</strain>
    </source>
</reference>
<reference key="3">
    <citation type="journal article" date="2017" name="Plant J.">
        <title>Araport11: a complete reannotation of the Arabidopsis thaliana reference genome.</title>
        <authorList>
            <person name="Cheng C.Y."/>
            <person name="Krishnakumar V."/>
            <person name="Chan A.P."/>
            <person name="Thibaud-Nissen F."/>
            <person name="Schobel S."/>
            <person name="Town C.D."/>
        </authorList>
    </citation>
    <scope>GENOME REANNOTATION</scope>
    <source>
        <strain>cv. Columbia</strain>
    </source>
</reference>
<reference key="4">
    <citation type="journal article" date="2003" name="Science">
        <title>Empirical analysis of transcriptional activity in the Arabidopsis genome.</title>
        <authorList>
            <person name="Yamada K."/>
            <person name="Lim J."/>
            <person name="Dale J.M."/>
            <person name="Chen H."/>
            <person name="Shinn P."/>
            <person name="Palm C.J."/>
            <person name="Southwick A.M."/>
            <person name="Wu H.C."/>
            <person name="Kim C.J."/>
            <person name="Nguyen M."/>
            <person name="Pham P.K."/>
            <person name="Cheuk R.F."/>
            <person name="Karlin-Newmann G."/>
            <person name="Liu S.X."/>
            <person name="Lam B."/>
            <person name="Sakano H."/>
            <person name="Wu T."/>
            <person name="Yu G."/>
            <person name="Miranda M."/>
            <person name="Quach H.L."/>
            <person name="Tripp M."/>
            <person name="Chang C.H."/>
            <person name="Lee J.M."/>
            <person name="Toriumi M.J."/>
            <person name="Chan M.M."/>
            <person name="Tang C.C."/>
            <person name="Onodera C.S."/>
            <person name="Deng J.M."/>
            <person name="Akiyama K."/>
            <person name="Ansari Y."/>
            <person name="Arakawa T."/>
            <person name="Banh J."/>
            <person name="Banno F."/>
            <person name="Bowser L."/>
            <person name="Brooks S.Y."/>
            <person name="Carninci P."/>
            <person name="Chao Q."/>
            <person name="Choy N."/>
            <person name="Enju A."/>
            <person name="Goldsmith A.D."/>
            <person name="Gurjal M."/>
            <person name="Hansen N.F."/>
            <person name="Hayashizaki Y."/>
            <person name="Johnson-Hopson C."/>
            <person name="Hsuan V.W."/>
            <person name="Iida K."/>
            <person name="Karnes M."/>
            <person name="Khan S."/>
            <person name="Koesema E."/>
            <person name="Ishida J."/>
            <person name="Jiang P.X."/>
            <person name="Jones T."/>
            <person name="Kawai J."/>
            <person name="Kamiya A."/>
            <person name="Meyers C."/>
            <person name="Nakajima M."/>
            <person name="Narusaka M."/>
            <person name="Seki M."/>
            <person name="Sakurai T."/>
            <person name="Satou M."/>
            <person name="Tamse R."/>
            <person name="Vaysberg M."/>
            <person name="Wallender E.K."/>
            <person name="Wong C."/>
            <person name="Yamamura Y."/>
            <person name="Yuan S."/>
            <person name="Shinozaki K."/>
            <person name="Davis R.W."/>
            <person name="Theologis A."/>
            <person name="Ecker J.R."/>
        </authorList>
    </citation>
    <scope>NUCLEOTIDE SEQUENCE [LARGE SCALE MRNA]</scope>
    <source>
        <strain>cv. Columbia</strain>
    </source>
</reference>
<reference key="5">
    <citation type="journal article" date="2018" name="Biochim. Biophys. Acta">
        <title>Phosphatidylglycerophosphate phosphatase is required for root growth in Arabidopsis.</title>
        <authorList>
            <person name="Lin Y.-C."/>
            <person name="Kobayashi K."/>
            <person name="Wada H."/>
            <person name="Nakamura Y."/>
        </authorList>
    </citation>
    <scope>FUNCTION</scope>
    <scope>DISRUPTION PHENOTYPE</scope>
    <scope>CATALYTIC ACTIVITY</scope>
    <scope>TISSUE SPECIFICITY</scope>
    <scope>PATHWAY</scope>
    <source>
        <strain>cv. Columbia</strain>
    </source>
</reference>
<comment type="function">
    <text evidence="1 6">Exhibits phosphatidylglycerophosphate phosphatase activity (PubMed:29476828). Involved in root growth and columella cells organization (PubMed:29476828). May possess protein phosphatase activity (By similarity).</text>
</comment>
<comment type="catalytic activity">
    <reaction evidence="1">
        <text>O-phospho-L-seryl-[protein] + H2O = L-seryl-[protein] + phosphate</text>
        <dbReference type="Rhea" id="RHEA:20629"/>
        <dbReference type="Rhea" id="RHEA-COMP:9863"/>
        <dbReference type="Rhea" id="RHEA-COMP:11604"/>
        <dbReference type="ChEBI" id="CHEBI:15377"/>
        <dbReference type="ChEBI" id="CHEBI:29999"/>
        <dbReference type="ChEBI" id="CHEBI:43474"/>
        <dbReference type="ChEBI" id="CHEBI:83421"/>
        <dbReference type="EC" id="3.1.3.16"/>
    </reaction>
</comment>
<comment type="catalytic activity">
    <reaction evidence="1">
        <text>O-phospho-L-threonyl-[protein] + H2O = L-threonyl-[protein] + phosphate</text>
        <dbReference type="Rhea" id="RHEA:47004"/>
        <dbReference type="Rhea" id="RHEA-COMP:11060"/>
        <dbReference type="Rhea" id="RHEA-COMP:11605"/>
        <dbReference type="ChEBI" id="CHEBI:15377"/>
        <dbReference type="ChEBI" id="CHEBI:30013"/>
        <dbReference type="ChEBI" id="CHEBI:43474"/>
        <dbReference type="ChEBI" id="CHEBI:61977"/>
        <dbReference type="EC" id="3.1.3.16"/>
    </reaction>
</comment>
<comment type="catalytic activity">
    <reaction evidence="4">
        <text>O-phospho-L-tyrosyl-[protein] + H2O = L-tyrosyl-[protein] + phosphate</text>
        <dbReference type="Rhea" id="RHEA:10684"/>
        <dbReference type="Rhea" id="RHEA-COMP:10136"/>
        <dbReference type="Rhea" id="RHEA-COMP:20101"/>
        <dbReference type="ChEBI" id="CHEBI:15377"/>
        <dbReference type="ChEBI" id="CHEBI:43474"/>
        <dbReference type="ChEBI" id="CHEBI:46858"/>
        <dbReference type="ChEBI" id="CHEBI:61978"/>
        <dbReference type="EC" id="3.1.3.48"/>
    </reaction>
</comment>
<comment type="catalytic activity">
    <reaction evidence="10">
        <text>a 1,2-diacyl-sn-glycero-3-phospho-(1'-sn-glycero-3'-phosphate) + H2O = a 1,2-diacyl-sn-glycero-3-phospho-(1'-sn-glycerol) + phosphate</text>
        <dbReference type="Rhea" id="RHEA:33751"/>
        <dbReference type="ChEBI" id="CHEBI:15377"/>
        <dbReference type="ChEBI" id="CHEBI:43474"/>
        <dbReference type="ChEBI" id="CHEBI:60110"/>
        <dbReference type="ChEBI" id="CHEBI:64716"/>
        <dbReference type="EC" id="3.1.3.27"/>
    </reaction>
    <physiologicalReaction direction="left-to-right" evidence="10">
        <dbReference type="Rhea" id="RHEA:33752"/>
    </physiologicalReaction>
</comment>
<comment type="pathway">
    <text evidence="10">Phospholipid metabolism; phosphatidylglycerol biosynthesis; phosphatidylglycerol from CDP-diacylglycerol: step 2/2.</text>
</comment>
<comment type="tissue specificity">
    <text evidence="6">Expressed in stems, roots, flowers, mature seeds and leaves.</text>
</comment>
<comment type="disruption phenotype">
    <text evidence="6">No visible phenotype in the double mutant ptpmt1-1 ptpmt2-1 (PubMed:29476828). But plants lacking PTPMT1, PTPMT2 and PGPP1 have strongly shorter roots associated with a defective order of columella cells in the root apices, with stronger effect than in the single mutant pgpp1-1 (PubMed:29476828).</text>
</comment>
<comment type="similarity">
    <text evidence="9">Belongs to the protein-tyrosine phosphatase family. Non-receptor class dual specificity subfamily.</text>
</comment>
<comment type="sequence caution" evidence="9">
    <conflict type="frameshift">
        <sequence resource="EMBL-CDS" id="AAK96749"/>
    </conflict>
</comment>
<evidence type="ECO:0000250" key="1">
    <source>
        <dbReference type="UniProtKB" id="P0C089"/>
    </source>
</evidence>
<evidence type="ECO:0000250" key="2">
    <source>
        <dbReference type="UniProtKB" id="Q9FEB5"/>
    </source>
</evidence>
<evidence type="ECO:0000255" key="3">
    <source>
        <dbReference type="PROSITE-ProRule" id="PRU00160"/>
    </source>
</evidence>
<evidence type="ECO:0000255" key="4">
    <source>
        <dbReference type="PROSITE-ProRule" id="PRU10044"/>
    </source>
</evidence>
<evidence type="ECO:0000256" key="5">
    <source>
        <dbReference type="SAM" id="MobiDB-lite"/>
    </source>
</evidence>
<evidence type="ECO:0000269" key="6">
    <source>
    </source>
</evidence>
<evidence type="ECO:0000303" key="7">
    <source>
    </source>
</evidence>
<evidence type="ECO:0000303" key="8">
    <source ref="1"/>
</evidence>
<evidence type="ECO:0000305" key="9"/>
<evidence type="ECO:0000305" key="10">
    <source>
    </source>
</evidence>
<evidence type="ECO:0000312" key="11">
    <source>
        <dbReference type="Araport" id="AT2G35680"/>
    </source>
</evidence>
<evidence type="ECO:0000312" key="12">
    <source>
        <dbReference type="EMBL" id="AAD15447.2"/>
    </source>
</evidence>
<feature type="chain" id="PRO_0000417332" description="Phosphatidylglycerophosphate phosphatase PTPMT1">
    <location>
        <begin position="1"/>
        <end position="337"/>
    </location>
</feature>
<feature type="domain" description="Tyrosine-protein phosphatase" evidence="3">
    <location>
        <begin position="73"/>
        <end position="220"/>
    </location>
</feature>
<feature type="region of interest" description="Disordered" evidence="5">
    <location>
        <begin position="1"/>
        <end position="20"/>
    </location>
</feature>
<feature type="short sequence motif" description="Glucan phosphatase signature motif CXAGXGR" evidence="2">
    <location>
        <begin position="164"/>
        <end position="170"/>
    </location>
</feature>
<feature type="active site" description="Phosphocysteine intermediate" evidence="3">
    <location>
        <position position="164"/>
    </location>
</feature>
<feature type="binding site" evidence="2">
    <location>
        <position position="55"/>
    </location>
    <ligand>
        <name>substrate</name>
    </ligand>
</feature>
<feature type="binding site" evidence="2">
    <location>
        <position position="133"/>
    </location>
    <ligand>
        <name>substrate</name>
    </ligand>
</feature>
<feature type="binding site" evidence="2">
    <location>
        <begin position="165"/>
        <end position="170"/>
    </location>
    <ligand>
        <name>substrate</name>
    </ligand>
</feature>
<accession>Q9ZQP1</accession>
<accession>Q8VZ64</accession>
<accession>Q940J5</accession>
<sequence>MYIKELTETDEEKRERSVEDNVDDGDKAVLVSRGNVIVLTTKRALVGVGARALFYPTLVYNVVRNKLESEFRWWDRVAEFILLGAVPFPSDVPQLKELGVCGVITLNEPYETLVPSSLYKSYCIDHLVIATRDYCFAPSMEAICQAVEFIHRNASLGKTTYVHCKAGRGRSTTIVICYLVQHKNMTPEAAYSYVRSIRPRVLLAAAQWKAVVEYYHVKVLNTQSCLTDATSALIPRNVKQVCSGNVVVFDDGSMVVVTHSDLEGYNDDDSRSRRSVKVNGNELWAAAADLSMVYRVKVVGQAAMARISCLWLGLREDQKLSGKNLSMGGISVDISVY</sequence>
<name>TPMT1_ARATH</name>
<keyword id="KW-0378">Hydrolase</keyword>
<keyword id="KW-0444">Lipid biosynthesis</keyword>
<keyword id="KW-0443">Lipid metabolism</keyword>
<keyword id="KW-0594">Phospholipid biosynthesis</keyword>
<keyword id="KW-1208">Phospholipid metabolism</keyword>
<keyword id="KW-0904">Protein phosphatase</keyword>
<keyword id="KW-1185">Reference proteome</keyword>
<dbReference type="EC" id="3.1.3.27" evidence="10"/>
<dbReference type="EC" id="3.1.3.16" evidence="1"/>
<dbReference type="EC" id="3.1.3.48" evidence="4"/>
<dbReference type="EMBL" id="AJ574761">
    <property type="protein sequence ID" value="CAE00415.1"/>
    <property type="molecule type" value="mRNA"/>
</dbReference>
<dbReference type="EMBL" id="AC006068">
    <property type="protein sequence ID" value="AAD15447.2"/>
    <property type="molecule type" value="Genomic_DNA"/>
</dbReference>
<dbReference type="EMBL" id="CP002685">
    <property type="protein sequence ID" value="AEC09144.1"/>
    <property type="molecule type" value="Genomic_DNA"/>
</dbReference>
<dbReference type="EMBL" id="AY054558">
    <property type="protein sequence ID" value="AAK96749.1"/>
    <property type="status" value="ALT_FRAME"/>
    <property type="molecule type" value="mRNA"/>
</dbReference>
<dbReference type="EMBL" id="AY065219">
    <property type="protein sequence ID" value="AAL38695.1"/>
    <property type="molecule type" value="mRNA"/>
</dbReference>
<dbReference type="EMBL" id="BT008574">
    <property type="protein sequence ID" value="AAP40401.1"/>
    <property type="molecule type" value="mRNA"/>
</dbReference>
<dbReference type="PIR" id="F84771">
    <property type="entry name" value="F84771"/>
</dbReference>
<dbReference type="RefSeq" id="NP_565816.1">
    <property type="nucleotide sequence ID" value="NM_129123.3"/>
</dbReference>
<dbReference type="SMR" id="Q9ZQP1"/>
<dbReference type="BioGRID" id="3482">
    <property type="interactions" value="1"/>
</dbReference>
<dbReference type="FunCoup" id="Q9ZQP1">
    <property type="interactions" value="1753"/>
</dbReference>
<dbReference type="STRING" id="3702.Q9ZQP1"/>
<dbReference type="PaxDb" id="3702-AT2G35680.1"/>
<dbReference type="ProteomicsDB" id="224297"/>
<dbReference type="EnsemblPlants" id="AT2G35680.1">
    <property type="protein sequence ID" value="AT2G35680.1"/>
    <property type="gene ID" value="AT2G35680"/>
</dbReference>
<dbReference type="GeneID" id="818137"/>
<dbReference type="Gramene" id="AT2G35680.1">
    <property type="protein sequence ID" value="AT2G35680.1"/>
    <property type="gene ID" value="AT2G35680"/>
</dbReference>
<dbReference type="KEGG" id="ath:AT2G35680"/>
<dbReference type="Araport" id="AT2G35680"/>
<dbReference type="TAIR" id="AT2G35680">
    <property type="gene designation" value="PTPMT1"/>
</dbReference>
<dbReference type="eggNOG" id="KOG1719">
    <property type="taxonomic scope" value="Eukaryota"/>
</dbReference>
<dbReference type="HOGENOM" id="CLU_047330_6_0_1"/>
<dbReference type="InParanoid" id="Q9ZQP1"/>
<dbReference type="OMA" id="RHDHKLS"/>
<dbReference type="OrthoDB" id="273181at2759"/>
<dbReference type="PhylomeDB" id="Q9ZQP1"/>
<dbReference type="BRENDA" id="3.1.3.27">
    <property type="organism ID" value="399"/>
</dbReference>
<dbReference type="UniPathway" id="UPA00084">
    <property type="reaction ID" value="UER00504"/>
</dbReference>
<dbReference type="PRO" id="PR:Q9ZQP1"/>
<dbReference type="Proteomes" id="UP000006548">
    <property type="component" value="Chromosome 2"/>
</dbReference>
<dbReference type="ExpressionAtlas" id="Q9ZQP1">
    <property type="expression patterns" value="baseline and differential"/>
</dbReference>
<dbReference type="GO" id="GO:0008962">
    <property type="term" value="F:phosphatidylglycerophosphatase activity"/>
    <property type="evidence" value="ECO:0000314"/>
    <property type="project" value="TAIR"/>
</dbReference>
<dbReference type="GO" id="GO:0004722">
    <property type="term" value="F:protein serine/threonine phosphatase activity"/>
    <property type="evidence" value="ECO:0007669"/>
    <property type="project" value="UniProtKB-EC"/>
</dbReference>
<dbReference type="GO" id="GO:0004725">
    <property type="term" value="F:protein tyrosine phosphatase activity"/>
    <property type="evidence" value="ECO:0007669"/>
    <property type="project" value="UniProtKB-EC"/>
</dbReference>
<dbReference type="GO" id="GO:0006655">
    <property type="term" value="P:phosphatidylglycerol biosynthetic process"/>
    <property type="evidence" value="ECO:0007669"/>
    <property type="project" value="UniProtKB-UniPathway"/>
</dbReference>
<dbReference type="GO" id="GO:0048364">
    <property type="term" value="P:root development"/>
    <property type="evidence" value="ECO:0000315"/>
    <property type="project" value="UniProtKB"/>
</dbReference>
<dbReference type="CDD" id="cd14524">
    <property type="entry name" value="PTPMT1"/>
    <property type="match status" value="1"/>
</dbReference>
<dbReference type="FunFam" id="3.90.190.10:FF:000051">
    <property type="entry name" value="Dual specificity phosphatase domain protein"/>
    <property type="match status" value="1"/>
</dbReference>
<dbReference type="Gene3D" id="3.90.190.10">
    <property type="entry name" value="Protein tyrosine phosphatase superfamily"/>
    <property type="match status" value="1"/>
</dbReference>
<dbReference type="InterPro" id="IPR000340">
    <property type="entry name" value="Dual-sp_phosphatase_cat-dom"/>
</dbReference>
<dbReference type="InterPro" id="IPR029021">
    <property type="entry name" value="Prot-tyrosine_phosphatase-like"/>
</dbReference>
<dbReference type="InterPro" id="IPR044596">
    <property type="entry name" value="PTPMT1-like"/>
</dbReference>
<dbReference type="InterPro" id="IPR016130">
    <property type="entry name" value="Tyr_Pase_AS"/>
</dbReference>
<dbReference type="InterPro" id="IPR000387">
    <property type="entry name" value="Tyr_Pase_dom"/>
</dbReference>
<dbReference type="InterPro" id="IPR020422">
    <property type="entry name" value="TYR_PHOSPHATASE_DUAL_dom"/>
</dbReference>
<dbReference type="PANTHER" id="PTHR46274:SF9">
    <property type="entry name" value="PHOSPHATIDYLGLYCEROPHOSPHATE PHOSPHATASE PTPMT1"/>
    <property type="match status" value="1"/>
</dbReference>
<dbReference type="PANTHER" id="PTHR46274">
    <property type="entry name" value="PHOSPHATIDYLINOSITOL PHOSPHATASE"/>
    <property type="match status" value="1"/>
</dbReference>
<dbReference type="Pfam" id="PF00782">
    <property type="entry name" value="DSPc"/>
    <property type="match status" value="1"/>
</dbReference>
<dbReference type="SMART" id="SM00195">
    <property type="entry name" value="DSPc"/>
    <property type="match status" value="1"/>
</dbReference>
<dbReference type="SUPFAM" id="SSF52799">
    <property type="entry name" value="(Phosphotyrosine protein) phosphatases II"/>
    <property type="match status" value="1"/>
</dbReference>
<dbReference type="PROSITE" id="PS00383">
    <property type="entry name" value="TYR_PHOSPHATASE_1"/>
    <property type="match status" value="1"/>
</dbReference>
<dbReference type="PROSITE" id="PS50056">
    <property type="entry name" value="TYR_PHOSPHATASE_2"/>
    <property type="match status" value="1"/>
</dbReference>
<dbReference type="PROSITE" id="PS50054">
    <property type="entry name" value="TYR_PHOSPHATASE_DUAL"/>
    <property type="match status" value="1"/>
</dbReference>
<protein>
    <recommendedName>
        <fullName evidence="7">Phosphatidylglycerophosphate phosphatase PTPMT1</fullName>
        <ecNumber evidence="10">3.1.3.27</ecNumber>
    </recommendedName>
    <alternativeName>
        <fullName evidence="7">Protein TYROSINE PHOSPHATASE LOCALIZED TO THE MITOCHONDRION 1</fullName>
    </alternativeName>
    <alternativeName>
        <fullName evidence="8">Putative dual specificity protein phosphatase DSP8</fullName>
        <ecNumber evidence="1">3.1.3.16</ecNumber>
        <ecNumber evidence="4">3.1.3.48</ecNumber>
    </alternativeName>
</protein>
<gene>
    <name evidence="7" type="primary">PTPMT1</name>
    <name evidence="8" type="synonym">DSP8</name>
    <name evidence="11" type="ordered locus">At2g35680</name>
    <name evidence="12" type="ORF">T20F21.13</name>
</gene>